<reference key="1">
    <citation type="journal article" date="2005" name="Science">
        <title>The transcriptional landscape of the mammalian genome.</title>
        <authorList>
            <person name="Carninci P."/>
            <person name="Kasukawa T."/>
            <person name="Katayama S."/>
            <person name="Gough J."/>
            <person name="Frith M.C."/>
            <person name="Maeda N."/>
            <person name="Oyama R."/>
            <person name="Ravasi T."/>
            <person name="Lenhard B."/>
            <person name="Wells C."/>
            <person name="Kodzius R."/>
            <person name="Shimokawa K."/>
            <person name="Bajic V.B."/>
            <person name="Brenner S.E."/>
            <person name="Batalov S."/>
            <person name="Forrest A.R."/>
            <person name="Zavolan M."/>
            <person name="Davis M.J."/>
            <person name="Wilming L.G."/>
            <person name="Aidinis V."/>
            <person name="Allen J.E."/>
            <person name="Ambesi-Impiombato A."/>
            <person name="Apweiler R."/>
            <person name="Aturaliya R.N."/>
            <person name="Bailey T.L."/>
            <person name="Bansal M."/>
            <person name="Baxter L."/>
            <person name="Beisel K.W."/>
            <person name="Bersano T."/>
            <person name="Bono H."/>
            <person name="Chalk A.M."/>
            <person name="Chiu K.P."/>
            <person name="Choudhary V."/>
            <person name="Christoffels A."/>
            <person name="Clutterbuck D.R."/>
            <person name="Crowe M.L."/>
            <person name="Dalla E."/>
            <person name="Dalrymple B.P."/>
            <person name="de Bono B."/>
            <person name="Della Gatta G."/>
            <person name="di Bernardo D."/>
            <person name="Down T."/>
            <person name="Engstrom P."/>
            <person name="Fagiolini M."/>
            <person name="Faulkner G."/>
            <person name="Fletcher C.F."/>
            <person name="Fukushima T."/>
            <person name="Furuno M."/>
            <person name="Futaki S."/>
            <person name="Gariboldi M."/>
            <person name="Georgii-Hemming P."/>
            <person name="Gingeras T.R."/>
            <person name="Gojobori T."/>
            <person name="Green R.E."/>
            <person name="Gustincich S."/>
            <person name="Harbers M."/>
            <person name="Hayashi Y."/>
            <person name="Hensch T.K."/>
            <person name="Hirokawa N."/>
            <person name="Hill D."/>
            <person name="Huminiecki L."/>
            <person name="Iacono M."/>
            <person name="Ikeo K."/>
            <person name="Iwama A."/>
            <person name="Ishikawa T."/>
            <person name="Jakt M."/>
            <person name="Kanapin A."/>
            <person name="Katoh M."/>
            <person name="Kawasawa Y."/>
            <person name="Kelso J."/>
            <person name="Kitamura H."/>
            <person name="Kitano H."/>
            <person name="Kollias G."/>
            <person name="Krishnan S.P."/>
            <person name="Kruger A."/>
            <person name="Kummerfeld S.K."/>
            <person name="Kurochkin I.V."/>
            <person name="Lareau L.F."/>
            <person name="Lazarevic D."/>
            <person name="Lipovich L."/>
            <person name="Liu J."/>
            <person name="Liuni S."/>
            <person name="McWilliam S."/>
            <person name="Madan Babu M."/>
            <person name="Madera M."/>
            <person name="Marchionni L."/>
            <person name="Matsuda H."/>
            <person name="Matsuzawa S."/>
            <person name="Miki H."/>
            <person name="Mignone F."/>
            <person name="Miyake S."/>
            <person name="Morris K."/>
            <person name="Mottagui-Tabar S."/>
            <person name="Mulder N."/>
            <person name="Nakano N."/>
            <person name="Nakauchi H."/>
            <person name="Ng P."/>
            <person name="Nilsson R."/>
            <person name="Nishiguchi S."/>
            <person name="Nishikawa S."/>
            <person name="Nori F."/>
            <person name="Ohara O."/>
            <person name="Okazaki Y."/>
            <person name="Orlando V."/>
            <person name="Pang K.C."/>
            <person name="Pavan W.J."/>
            <person name="Pavesi G."/>
            <person name="Pesole G."/>
            <person name="Petrovsky N."/>
            <person name="Piazza S."/>
            <person name="Reed J."/>
            <person name="Reid J.F."/>
            <person name="Ring B.Z."/>
            <person name="Ringwald M."/>
            <person name="Rost B."/>
            <person name="Ruan Y."/>
            <person name="Salzberg S.L."/>
            <person name="Sandelin A."/>
            <person name="Schneider C."/>
            <person name="Schoenbach C."/>
            <person name="Sekiguchi K."/>
            <person name="Semple C.A."/>
            <person name="Seno S."/>
            <person name="Sessa L."/>
            <person name="Sheng Y."/>
            <person name="Shibata Y."/>
            <person name="Shimada H."/>
            <person name="Shimada K."/>
            <person name="Silva D."/>
            <person name="Sinclair B."/>
            <person name="Sperling S."/>
            <person name="Stupka E."/>
            <person name="Sugiura K."/>
            <person name="Sultana R."/>
            <person name="Takenaka Y."/>
            <person name="Taki K."/>
            <person name="Tammoja K."/>
            <person name="Tan S.L."/>
            <person name="Tang S."/>
            <person name="Taylor M.S."/>
            <person name="Tegner J."/>
            <person name="Teichmann S.A."/>
            <person name="Ueda H.R."/>
            <person name="van Nimwegen E."/>
            <person name="Verardo R."/>
            <person name="Wei C.L."/>
            <person name="Yagi K."/>
            <person name="Yamanishi H."/>
            <person name="Zabarovsky E."/>
            <person name="Zhu S."/>
            <person name="Zimmer A."/>
            <person name="Hide W."/>
            <person name="Bult C."/>
            <person name="Grimmond S.M."/>
            <person name="Teasdale R.D."/>
            <person name="Liu E.T."/>
            <person name="Brusic V."/>
            <person name="Quackenbush J."/>
            <person name="Wahlestedt C."/>
            <person name="Mattick J.S."/>
            <person name="Hume D.A."/>
            <person name="Kai C."/>
            <person name="Sasaki D."/>
            <person name="Tomaru Y."/>
            <person name="Fukuda S."/>
            <person name="Kanamori-Katayama M."/>
            <person name="Suzuki M."/>
            <person name="Aoki J."/>
            <person name="Arakawa T."/>
            <person name="Iida J."/>
            <person name="Imamura K."/>
            <person name="Itoh M."/>
            <person name="Kato T."/>
            <person name="Kawaji H."/>
            <person name="Kawagashira N."/>
            <person name="Kawashima T."/>
            <person name="Kojima M."/>
            <person name="Kondo S."/>
            <person name="Konno H."/>
            <person name="Nakano K."/>
            <person name="Ninomiya N."/>
            <person name="Nishio T."/>
            <person name="Okada M."/>
            <person name="Plessy C."/>
            <person name="Shibata K."/>
            <person name="Shiraki T."/>
            <person name="Suzuki S."/>
            <person name="Tagami M."/>
            <person name="Waki K."/>
            <person name="Watahiki A."/>
            <person name="Okamura-Oho Y."/>
            <person name="Suzuki H."/>
            <person name="Kawai J."/>
            <person name="Hayashizaki Y."/>
        </authorList>
    </citation>
    <scope>NUCLEOTIDE SEQUENCE [LARGE SCALE MRNA]</scope>
    <source>
        <strain>C57BL/6J</strain>
        <tissue>Cerebellum</tissue>
        <tissue>Corpora quadrigemina</tissue>
        <tissue>Medulla oblongata</tissue>
    </source>
</reference>
<reference key="2">
    <citation type="journal article" date="2009" name="PLoS Biol.">
        <title>Lineage-specific biology revealed by a finished genome assembly of the mouse.</title>
        <authorList>
            <person name="Church D.M."/>
            <person name="Goodstadt L."/>
            <person name="Hillier L.W."/>
            <person name="Zody M.C."/>
            <person name="Goldstein S."/>
            <person name="She X."/>
            <person name="Bult C.J."/>
            <person name="Agarwala R."/>
            <person name="Cherry J.L."/>
            <person name="DiCuccio M."/>
            <person name="Hlavina W."/>
            <person name="Kapustin Y."/>
            <person name="Meric P."/>
            <person name="Maglott D."/>
            <person name="Birtle Z."/>
            <person name="Marques A.C."/>
            <person name="Graves T."/>
            <person name="Zhou S."/>
            <person name="Teague B."/>
            <person name="Potamousis K."/>
            <person name="Churas C."/>
            <person name="Place M."/>
            <person name="Herschleb J."/>
            <person name="Runnheim R."/>
            <person name="Forrest D."/>
            <person name="Amos-Landgraf J."/>
            <person name="Schwartz D.C."/>
            <person name="Cheng Z."/>
            <person name="Lindblad-Toh K."/>
            <person name="Eichler E.E."/>
            <person name="Ponting C.P."/>
        </authorList>
    </citation>
    <scope>NUCLEOTIDE SEQUENCE [LARGE SCALE GENOMIC DNA]</scope>
    <source>
        <strain>C57BL/6J</strain>
    </source>
</reference>
<reference key="3">
    <citation type="journal article" date="2004" name="Genome Res.">
        <title>The status, quality, and expansion of the NIH full-length cDNA project: the Mammalian Gene Collection (MGC).</title>
        <authorList>
            <consortium name="The MGC Project Team"/>
        </authorList>
    </citation>
    <scope>NUCLEOTIDE SEQUENCE [LARGE SCALE MRNA]</scope>
</reference>
<reference key="4">
    <citation type="journal article" date="2010" name="Cell">
        <title>A tissue-specific atlas of mouse protein phosphorylation and expression.</title>
        <authorList>
            <person name="Huttlin E.L."/>
            <person name="Jedrychowski M.P."/>
            <person name="Elias J.E."/>
            <person name="Goswami T."/>
            <person name="Rad R."/>
            <person name="Beausoleil S.A."/>
            <person name="Villen J."/>
            <person name="Haas W."/>
            <person name="Sowa M.E."/>
            <person name="Gygi S.P."/>
        </authorList>
    </citation>
    <scope>IDENTIFICATION BY MASS SPECTROMETRY [LARGE SCALE ANALYSIS]</scope>
    <source>
        <tissue>Brain</tissue>
    </source>
</reference>
<protein>
    <recommendedName>
        <fullName>BTB/POZ domain-containing protein 17</fullName>
    </recommendedName>
    <alternativeName>
        <fullName>Galectin-3-binding protein-like</fullName>
    </alternativeName>
</protein>
<feature type="signal peptide" evidence="1">
    <location>
        <begin position="1"/>
        <end position="28"/>
    </location>
</feature>
<feature type="chain" id="PRO_0000340705" description="BTB/POZ domain-containing protein 17">
    <location>
        <begin position="29"/>
        <end position="478"/>
    </location>
</feature>
<feature type="domain" description="BTB" evidence="2">
    <location>
        <begin position="63"/>
        <end position="132"/>
    </location>
</feature>
<feature type="domain" description="BACK">
    <location>
        <begin position="169"/>
        <end position="269"/>
    </location>
</feature>
<feature type="glycosylation site" description="N-linked (GlcNAc...) asparagine" evidence="1">
    <location>
        <position position="61"/>
    </location>
</feature>
<feature type="glycosylation site" description="N-linked (GlcNAc...) asparagine" evidence="1">
    <location>
        <position position="100"/>
    </location>
</feature>
<feature type="glycosylation site" description="N-linked (GlcNAc...) asparagine" evidence="1">
    <location>
        <position position="195"/>
    </location>
</feature>
<feature type="glycosylation site" description="N-linked (GlcNAc...) asparagine" evidence="1">
    <location>
        <position position="307"/>
    </location>
</feature>
<comment type="subcellular location">
    <subcellularLocation>
        <location evidence="3">Secreted</location>
    </subcellularLocation>
</comment>
<evidence type="ECO:0000255" key="1"/>
<evidence type="ECO:0000255" key="2">
    <source>
        <dbReference type="PROSITE-ProRule" id="PRU00037"/>
    </source>
</evidence>
<evidence type="ECO:0000305" key="3"/>
<accession>Q9DB72</accession>
<organism>
    <name type="scientific">Mus musculus</name>
    <name type="common">Mouse</name>
    <dbReference type="NCBI Taxonomy" id="10090"/>
    <lineage>
        <taxon>Eukaryota</taxon>
        <taxon>Metazoa</taxon>
        <taxon>Chordata</taxon>
        <taxon>Craniata</taxon>
        <taxon>Vertebrata</taxon>
        <taxon>Euteleostomi</taxon>
        <taxon>Mammalia</taxon>
        <taxon>Eutheria</taxon>
        <taxon>Euarchontoglires</taxon>
        <taxon>Glires</taxon>
        <taxon>Rodentia</taxon>
        <taxon>Myomorpha</taxon>
        <taxon>Muroidea</taxon>
        <taxon>Muridae</taxon>
        <taxon>Murinae</taxon>
        <taxon>Mus</taxon>
        <taxon>Mus</taxon>
    </lineage>
</organism>
<keyword id="KW-0325">Glycoprotein</keyword>
<keyword id="KW-1185">Reference proteome</keyword>
<keyword id="KW-0964">Secreted</keyword>
<keyword id="KW-0732">Signal</keyword>
<name>BTBDH_MOUSE</name>
<proteinExistence type="evidence at protein level"/>
<gene>
    <name type="primary">Btbd17</name>
</gene>
<sequence length="478" mass="52602">MLRKGSCKPGSWGSFWAILALVGLVTRAAQRADVGGEAAGTAINHSHMLLQRLQDLLRQGNASDVILRVQAVGTDEVRAFHTHRLLLGLHSELFRELLSNQSEVMLRESRDCAAVFDKFIRYLYCGELTVLLAQAIPLHRLATKYRVASLQRGVADYMRAHLAGGVGPAVGWYHYAVSTGDEALRESCLQFLAWNLSAVAGSAEWGAVSPELLAQLLQRSDLVLQDELELFHALEAWLGRARPPPTVAERALRAIRYPMIPPAQLFQLQARSAALARHGPAVADLLLQAYQFHAASPLHYAKFFHVNGSAFLPRNYLAPAWGAPWVINNPARDDRSTSFQTQLGPSGHDAGRRITWNVLFSPRWLPVSLRPVYADAAGTALPAARPEDGRPRLVVTPASSGGDAAGVSFQKTVLVGARHQGRLLVRHAYSFHQSSEEAGDFLAHADLQRRNSEYLVENALHLHLIVKPVYHTLIRTPS</sequence>
<dbReference type="EMBL" id="AK005160">
    <property type="protein sequence ID" value="BAB23851.1"/>
    <property type="molecule type" value="mRNA"/>
</dbReference>
<dbReference type="EMBL" id="AK032100">
    <property type="protein sequence ID" value="BAC27699.1"/>
    <property type="molecule type" value="mRNA"/>
</dbReference>
<dbReference type="EMBL" id="AK046050">
    <property type="protein sequence ID" value="BAC32582.1"/>
    <property type="molecule type" value="mRNA"/>
</dbReference>
<dbReference type="EMBL" id="AL663079">
    <property type="status" value="NOT_ANNOTATED_CDS"/>
    <property type="molecule type" value="Genomic_DNA"/>
</dbReference>
<dbReference type="EMBL" id="BC122876">
    <property type="protein sequence ID" value="AAI22877.1"/>
    <property type="molecule type" value="mRNA"/>
</dbReference>
<dbReference type="CCDS" id="CCDS25610.1"/>
<dbReference type="RefSeq" id="NP_082331.1">
    <property type="nucleotide sequence ID" value="NM_028055.4"/>
</dbReference>
<dbReference type="SMR" id="Q9DB72"/>
<dbReference type="BioGRID" id="215093">
    <property type="interactions" value="2"/>
</dbReference>
<dbReference type="FunCoup" id="Q9DB72">
    <property type="interactions" value="50"/>
</dbReference>
<dbReference type="IntAct" id="Q9DB72">
    <property type="interactions" value="1"/>
</dbReference>
<dbReference type="MINT" id="Q9DB72"/>
<dbReference type="STRING" id="10090.ENSMUSP00000000206"/>
<dbReference type="GlyConnect" id="2162">
    <property type="glycosylation" value="22 N-Linked glycans (4 sites)"/>
</dbReference>
<dbReference type="GlyCosmos" id="Q9DB72">
    <property type="glycosylation" value="5 sites, 22 glycans"/>
</dbReference>
<dbReference type="GlyGen" id="Q9DB72">
    <property type="glycosylation" value="7 sites, 23 N-linked glycans (4 sites), 1 O-linked glycan (1 site)"/>
</dbReference>
<dbReference type="iPTMnet" id="Q9DB72"/>
<dbReference type="PhosphoSitePlus" id="Q9DB72"/>
<dbReference type="PaxDb" id="10090-ENSMUSP00000000206"/>
<dbReference type="PeptideAtlas" id="Q9DB72"/>
<dbReference type="ProteomicsDB" id="273711"/>
<dbReference type="Antibodypedia" id="19431">
    <property type="antibodies" value="78 antibodies from 16 providers"/>
</dbReference>
<dbReference type="DNASU" id="72014"/>
<dbReference type="Ensembl" id="ENSMUST00000000206.4">
    <property type="protein sequence ID" value="ENSMUSP00000000206.4"/>
    <property type="gene ID" value="ENSMUSG00000000202.10"/>
</dbReference>
<dbReference type="GeneID" id="72014"/>
<dbReference type="KEGG" id="mmu:72014"/>
<dbReference type="UCSC" id="uc007mfr.1">
    <property type="organism name" value="mouse"/>
</dbReference>
<dbReference type="AGR" id="MGI:1919264"/>
<dbReference type="CTD" id="388419"/>
<dbReference type="MGI" id="MGI:1919264">
    <property type="gene designation" value="Btbd17"/>
</dbReference>
<dbReference type="VEuPathDB" id="HostDB:ENSMUSG00000000202"/>
<dbReference type="eggNOG" id="KOG2075">
    <property type="taxonomic scope" value="Eukaryota"/>
</dbReference>
<dbReference type="GeneTree" id="ENSGT00950000182983"/>
<dbReference type="HOGENOM" id="CLU_044480_0_0_1"/>
<dbReference type="InParanoid" id="Q9DB72"/>
<dbReference type="OMA" id="TVLNHSM"/>
<dbReference type="PhylomeDB" id="Q9DB72"/>
<dbReference type="TreeFam" id="TF331368"/>
<dbReference type="BioGRID-ORCS" id="72014">
    <property type="hits" value="3 hits in 76 CRISPR screens"/>
</dbReference>
<dbReference type="CD-CODE" id="CE726F99">
    <property type="entry name" value="Postsynaptic density"/>
</dbReference>
<dbReference type="ChiTaRS" id="Btbd17">
    <property type="organism name" value="mouse"/>
</dbReference>
<dbReference type="PRO" id="PR:Q9DB72"/>
<dbReference type="Proteomes" id="UP000000589">
    <property type="component" value="Chromosome 11"/>
</dbReference>
<dbReference type="RNAct" id="Q9DB72">
    <property type="molecule type" value="protein"/>
</dbReference>
<dbReference type="Bgee" id="ENSMUSG00000000202">
    <property type="expression patterns" value="Expressed in lumbar subsegment of spinal cord and 71 other cell types or tissues"/>
</dbReference>
<dbReference type="GO" id="GO:0005576">
    <property type="term" value="C:extracellular region"/>
    <property type="evidence" value="ECO:0007669"/>
    <property type="project" value="UniProtKB-SubCell"/>
</dbReference>
<dbReference type="CDD" id="cd18493">
    <property type="entry name" value="BACK_BTBD17"/>
    <property type="match status" value="1"/>
</dbReference>
<dbReference type="FunFam" id="1.25.40.420:FF:000021">
    <property type="entry name" value="BTB/POZ domain-containing protein 17"/>
    <property type="match status" value="1"/>
</dbReference>
<dbReference type="Gene3D" id="1.25.40.420">
    <property type="match status" value="1"/>
</dbReference>
<dbReference type="Gene3D" id="3.30.710.10">
    <property type="entry name" value="Potassium Channel Kv1.1, Chain A"/>
    <property type="match status" value="1"/>
</dbReference>
<dbReference type="InterPro" id="IPR011705">
    <property type="entry name" value="BACK"/>
</dbReference>
<dbReference type="InterPro" id="IPR051481">
    <property type="entry name" value="BTB-POZ/Galectin-3-binding"/>
</dbReference>
<dbReference type="InterPro" id="IPR000210">
    <property type="entry name" value="BTB/POZ_dom"/>
</dbReference>
<dbReference type="InterPro" id="IPR011333">
    <property type="entry name" value="SKP1/BTB/POZ_sf"/>
</dbReference>
<dbReference type="InterPro" id="IPR056184">
    <property type="entry name" value="TRAF_BTBD17"/>
</dbReference>
<dbReference type="PANTHER" id="PTHR24410:SF12">
    <property type="entry name" value="BTB_POZ DOMAIN-CONTAINING PROTEIN 17"/>
    <property type="match status" value="1"/>
</dbReference>
<dbReference type="PANTHER" id="PTHR24410">
    <property type="entry name" value="HL07962P-RELATED"/>
    <property type="match status" value="1"/>
</dbReference>
<dbReference type="Pfam" id="PF07707">
    <property type="entry name" value="BACK"/>
    <property type="match status" value="1"/>
</dbReference>
<dbReference type="Pfam" id="PF00651">
    <property type="entry name" value="BTB"/>
    <property type="match status" value="1"/>
</dbReference>
<dbReference type="Pfam" id="PF23651">
    <property type="entry name" value="TRAF_BTBD17"/>
    <property type="match status" value="1"/>
</dbReference>
<dbReference type="SMART" id="SM00875">
    <property type="entry name" value="BACK"/>
    <property type="match status" value="1"/>
</dbReference>
<dbReference type="SMART" id="SM00225">
    <property type="entry name" value="BTB"/>
    <property type="match status" value="1"/>
</dbReference>
<dbReference type="SUPFAM" id="SSF54695">
    <property type="entry name" value="POZ domain"/>
    <property type="match status" value="1"/>
</dbReference>
<dbReference type="PROSITE" id="PS50097">
    <property type="entry name" value="BTB"/>
    <property type="match status" value="1"/>
</dbReference>